<protein>
    <recommendedName>
        <fullName evidence="3">Conotoxin Leo-O2</fullName>
    </recommendedName>
</protein>
<sequence length="73" mass="8319">MKLTCVLIIAVLFLTACQLVTADYSGDEQQYRAMRLIDAMRNFGDTRSCGRRGKPCPCCRGFRCTGSFCRKWQ</sequence>
<proteinExistence type="inferred from homology"/>
<comment type="subcellular location">
    <subcellularLocation>
        <location evidence="5">Secreted</location>
    </subcellularLocation>
</comment>
<comment type="tissue specificity">
    <text evidence="5">Expressed by the venom duct.</text>
</comment>
<comment type="domain">
    <text evidence="1">The presence of a 'disulfide through disulfide knot' structurally defines this protein as a knottin.</text>
</comment>
<comment type="domain">
    <text evidence="4">The cysteine framework is VI/VII (C-C-CC-C-C).</text>
</comment>
<comment type="similarity">
    <text evidence="4">Belongs to the conotoxin O1 superfamily.</text>
</comment>
<name>O16_CONLE</name>
<organism>
    <name type="scientific">Conus leopardus</name>
    <name type="common">Leopard cone</name>
    <dbReference type="NCBI Taxonomy" id="101306"/>
    <lineage>
        <taxon>Eukaryota</taxon>
        <taxon>Metazoa</taxon>
        <taxon>Spiralia</taxon>
        <taxon>Lophotrochozoa</taxon>
        <taxon>Mollusca</taxon>
        <taxon>Gastropoda</taxon>
        <taxon>Caenogastropoda</taxon>
        <taxon>Neogastropoda</taxon>
        <taxon>Conoidea</taxon>
        <taxon>Conidae</taxon>
        <taxon>Conus</taxon>
        <taxon>Lithoconus</taxon>
    </lineage>
</organism>
<keyword id="KW-1015">Disulfide bond</keyword>
<keyword id="KW-0960">Knottin</keyword>
<keyword id="KW-0528">Neurotoxin</keyword>
<keyword id="KW-0964">Secreted</keyword>
<keyword id="KW-0732">Signal</keyword>
<keyword id="KW-0800">Toxin</keyword>
<feature type="signal peptide" evidence="2">
    <location>
        <begin position="1"/>
        <end position="22"/>
    </location>
</feature>
<feature type="propeptide" id="PRO_0000368005" evidence="5">
    <location>
        <begin position="23"/>
        <end position="47"/>
    </location>
</feature>
<feature type="peptide" id="PRO_0000368006" description="Conotoxin Leo-O2" evidence="5">
    <location>
        <begin position="48"/>
        <end position="73"/>
    </location>
</feature>
<feature type="disulfide bond" evidence="4">
    <location>
        <begin position="49"/>
        <end position="59"/>
    </location>
</feature>
<feature type="disulfide bond" evidence="4">
    <location>
        <begin position="56"/>
        <end position="64"/>
    </location>
</feature>
<feature type="disulfide bond" evidence="4">
    <location>
        <begin position="58"/>
        <end position="69"/>
    </location>
</feature>
<dbReference type="EMBL" id="EF467317">
    <property type="status" value="NOT_ANNOTATED_CDS"/>
    <property type="molecule type" value="Genomic_DNA"/>
</dbReference>
<dbReference type="ConoServer" id="3721">
    <property type="toxin name" value="Lp6.2 precursor"/>
</dbReference>
<dbReference type="GO" id="GO:0005576">
    <property type="term" value="C:extracellular region"/>
    <property type="evidence" value="ECO:0007669"/>
    <property type="project" value="UniProtKB-SubCell"/>
</dbReference>
<dbReference type="GO" id="GO:0008200">
    <property type="term" value="F:ion channel inhibitor activity"/>
    <property type="evidence" value="ECO:0007669"/>
    <property type="project" value="InterPro"/>
</dbReference>
<dbReference type="GO" id="GO:0090729">
    <property type="term" value="F:toxin activity"/>
    <property type="evidence" value="ECO:0007669"/>
    <property type="project" value="UniProtKB-KW"/>
</dbReference>
<dbReference type="InterPro" id="IPR004214">
    <property type="entry name" value="Conotoxin"/>
</dbReference>
<dbReference type="Pfam" id="PF02950">
    <property type="entry name" value="Conotoxin"/>
    <property type="match status" value="1"/>
</dbReference>
<evidence type="ECO:0000250" key="1"/>
<evidence type="ECO:0000255" key="2"/>
<evidence type="ECO:0000303" key="3">
    <source>
    </source>
</evidence>
<evidence type="ECO:0000305" key="4"/>
<evidence type="ECO:0000305" key="5">
    <source>
    </source>
</evidence>
<reference key="1">
    <citation type="journal article" date="2008" name="Mol. Ecol.">
        <title>Evolution of ecological specialization and venom of a predatory marine gastropod.</title>
        <authorList>
            <person name="Remigio E.A."/>
            <person name="Duda T.F. Jr."/>
        </authorList>
    </citation>
    <scope>NUCLEOTIDE SEQUENCE [GENOMIC DNA]</scope>
</reference>
<accession>P0C903</accession>